<name>SYN_MYXXD</name>
<protein>
    <recommendedName>
        <fullName evidence="1">Asparagine--tRNA ligase</fullName>
        <ecNumber evidence="1">6.1.1.22</ecNumber>
    </recommendedName>
    <alternativeName>
        <fullName evidence="1">Asparaginyl-tRNA synthetase</fullName>
        <shortName evidence="1">AsnRS</shortName>
    </alternativeName>
</protein>
<reference key="1">
    <citation type="journal article" date="2006" name="Proc. Natl. Acad. Sci. U.S.A.">
        <title>Evolution of sensory complexity recorded in a myxobacterial genome.</title>
        <authorList>
            <person name="Goldman B.S."/>
            <person name="Nierman W.C."/>
            <person name="Kaiser D."/>
            <person name="Slater S.C."/>
            <person name="Durkin A.S."/>
            <person name="Eisen J.A."/>
            <person name="Ronning C.M."/>
            <person name="Barbazuk W.B."/>
            <person name="Blanchard M."/>
            <person name="Field C."/>
            <person name="Halling C."/>
            <person name="Hinkle G."/>
            <person name="Iartchuk O."/>
            <person name="Kim H.S."/>
            <person name="Mackenzie C."/>
            <person name="Madupu R."/>
            <person name="Miller N."/>
            <person name="Shvartsbeyn A."/>
            <person name="Sullivan S.A."/>
            <person name="Vaudin M."/>
            <person name="Wiegand R."/>
            <person name="Kaplan H.B."/>
        </authorList>
    </citation>
    <scope>NUCLEOTIDE SEQUENCE [LARGE SCALE GENOMIC DNA]</scope>
    <source>
        <strain>DK1622</strain>
    </source>
</reference>
<comment type="catalytic activity">
    <reaction evidence="1">
        <text>tRNA(Asn) + L-asparagine + ATP = L-asparaginyl-tRNA(Asn) + AMP + diphosphate + H(+)</text>
        <dbReference type="Rhea" id="RHEA:11180"/>
        <dbReference type="Rhea" id="RHEA-COMP:9659"/>
        <dbReference type="Rhea" id="RHEA-COMP:9674"/>
        <dbReference type="ChEBI" id="CHEBI:15378"/>
        <dbReference type="ChEBI" id="CHEBI:30616"/>
        <dbReference type="ChEBI" id="CHEBI:33019"/>
        <dbReference type="ChEBI" id="CHEBI:58048"/>
        <dbReference type="ChEBI" id="CHEBI:78442"/>
        <dbReference type="ChEBI" id="CHEBI:78515"/>
        <dbReference type="ChEBI" id="CHEBI:456215"/>
        <dbReference type="EC" id="6.1.1.22"/>
    </reaction>
</comment>
<comment type="subunit">
    <text evidence="1">Homodimer.</text>
</comment>
<comment type="subcellular location">
    <subcellularLocation>
        <location evidence="1">Cytoplasm</location>
    </subcellularLocation>
</comment>
<comment type="similarity">
    <text evidence="1">Belongs to the class-II aminoacyl-tRNA synthetase family.</text>
</comment>
<sequence length="466" mass="52753">MQVVSVKKALAGGVEEGTKVEVRGWVRTRRDSKAGISFVNVSDGSTFDPIQVVAPNSLPNYEKEILHLTAGCSVISRGTLVKSQGKGQAYEVQADEVQVLGFVDDPDTYPIQPKQHTLEFLRDVAHLRVRTNTFSAVTRVRHRAAQAVHRFFDEEGFFWVNTPIITASDAEGAGQMFRVSTLDAVNPPRTSDGKIDWHKDFFGKEAYLTVSGQLNAEAYALAMSKVYTFGPTFRAENSNTTRHLAEFWMIEPEVAFADLNEDANLAERFLKHVFKAVLNDCAPDLKFFEERVQKGVIERMEKFINSSFERIDYTEAVEILKKAKKKFEFEPEWGKDLQTEHERYLTEEHVGRPVVVMNYPEAIKSFYMRLNDDGKTVAAMDVLAPGIGEIIGGSQREERLDVLDQRIQKFGLKPESYQWYRDLRRYGSVPHAGFGLGFERLIVYMCGLQNIRDAIPYPRVPGSAAF</sequence>
<accession>Q1DA04</accession>
<gene>
    <name evidence="1" type="primary">asnS</name>
    <name type="ordered locus">MXAN_2298</name>
</gene>
<proteinExistence type="inferred from homology"/>
<evidence type="ECO:0000255" key="1">
    <source>
        <dbReference type="HAMAP-Rule" id="MF_00534"/>
    </source>
</evidence>
<keyword id="KW-0030">Aminoacyl-tRNA synthetase</keyword>
<keyword id="KW-0067">ATP-binding</keyword>
<keyword id="KW-0963">Cytoplasm</keyword>
<keyword id="KW-0436">Ligase</keyword>
<keyword id="KW-0547">Nucleotide-binding</keyword>
<keyword id="KW-0648">Protein biosynthesis</keyword>
<keyword id="KW-1185">Reference proteome</keyword>
<dbReference type="EC" id="6.1.1.22" evidence="1"/>
<dbReference type="EMBL" id="CP000113">
    <property type="protein sequence ID" value="ABF90916.1"/>
    <property type="molecule type" value="Genomic_DNA"/>
</dbReference>
<dbReference type="RefSeq" id="WP_011552374.1">
    <property type="nucleotide sequence ID" value="NC_008095.1"/>
</dbReference>
<dbReference type="SMR" id="Q1DA04"/>
<dbReference type="STRING" id="246197.MXAN_2298"/>
<dbReference type="EnsemblBacteria" id="ABF90916">
    <property type="protein sequence ID" value="ABF90916"/>
    <property type="gene ID" value="MXAN_2298"/>
</dbReference>
<dbReference type="GeneID" id="41359685"/>
<dbReference type="KEGG" id="mxa:MXAN_2298"/>
<dbReference type="eggNOG" id="COG0017">
    <property type="taxonomic scope" value="Bacteria"/>
</dbReference>
<dbReference type="HOGENOM" id="CLU_004553_2_0_7"/>
<dbReference type="OrthoDB" id="9802326at2"/>
<dbReference type="Proteomes" id="UP000002402">
    <property type="component" value="Chromosome"/>
</dbReference>
<dbReference type="GO" id="GO:0005737">
    <property type="term" value="C:cytoplasm"/>
    <property type="evidence" value="ECO:0007669"/>
    <property type="project" value="UniProtKB-SubCell"/>
</dbReference>
<dbReference type="GO" id="GO:0004816">
    <property type="term" value="F:asparagine-tRNA ligase activity"/>
    <property type="evidence" value="ECO:0007669"/>
    <property type="project" value="UniProtKB-UniRule"/>
</dbReference>
<dbReference type="GO" id="GO:0005524">
    <property type="term" value="F:ATP binding"/>
    <property type="evidence" value="ECO:0007669"/>
    <property type="project" value="UniProtKB-UniRule"/>
</dbReference>
<dbReference type="GO" id="GO:0003676">
    <property type="term" value="F:nucleic acid binding"/>
    <property type="evidence" value="ECO:0007669"/>
    <property type="project" value="InterPro"/>
</dbReference>
<dbReference type="GO" id="GO:0006421">
    <property type="term" value="P:asparaginyl-tRNA aminoacylation"/>
    <property type="evidence" value="ECO:0007669"/>
    <property type="project" value="UniProtKB-UniRule"/>
</dbReference>
<dbReference type="CDD" id="cd00776">
    <property type="entry name" value="AsxRS_core"/>
    <property type="match status" value="1"/>
</dbReference>
<dbReference type="CDD" id="cd04318">
    <property type="entry name" value="EcAsnRS_like_N"/>
    <property type="match status" value="1"/>
</dbReference>
<dbReference type="FunFam" id="3.30.930.10:FF:000016">
    <property type="entry name" value="Asparagine--tRNA ligase"/>
    <property type="match status" value="1"/>
</dbReference>
<dbReference type="Gene3D" id="3.30.930.10">
    <property type="entry name" value="Bira Bifunctional Protein, Domain 2"/>
    <property type="match status" value="1"/>
</dbReference>
<dbReference type="Gene3D" id="2.40.50.140">
    <property type="entry name" value="Nucleic acid-binding proteins"/>
    <property type="match status" value="1"/>
</dbReference>
<dbReference type="HAMAP" id="MF_00534">
    <property type="entry name" value="Asn_tRNA_synth"/>
    <property type="match status" value="1"/>
</dbReference>
<dbReference type="InterPro" id="IPR004364">
    <property type="entry name" value="Aa-tRNA-synt_II"/>
</dbReference>
<dbReference type="InterPro" id="IPR006195">
    <property type="entry name" value="aa-tRNA-synth_II"/>
</dbReference>
<dbReference type="InterPro" id="IPR045864">
    <property type="entry name" value="aa-tRNA-synth_II/BPL/LPL"/>
</dbReference>
<dbReference type="InterPro" id="IPR004522">
    <property type="entry name" value="Asn-tRNA-ligase"/>
</dbReference>
<dbReference type="InterPro" id="IPR002312">
    <property type="entry name" value="Asp/Asn-tRNA-synth_IIb"/>
</dbReference>
<dbReference type="InterPro" id="IPR012340">
    <property type="entry name" value="NA-bd_OB-fold"/>
</dbReference>
<dbReference type="InterPro" id="IPR004365">
    <property type="entry name" value="NA-bd_OB_tRNA"/>
</dbReference>
<dbReference type="NCBIfam" id="TIGR00457">
    <property type="entry name" value="asnS"/>
    <property type="match status" value="1"/>
</dbReference>
<dbReference type="NCBIfam" id="NF003037">
    <property type="entry name" value="PRK03932.1"/>
    <property type="match status" value="1"/>
</dbReference>
<dbReference type="PANTHER" id="PTHR22594:SF34">
    <property type="entry name" value="ASPARAGINE--TRNA LIGASE, MITOCHONDRIAL-RELATED"/>
    <property type="match status" value="1"/>
</dbReference>
<dbReference type="PANTHER" id="PTHR22594">
    <property type="entry name" value="ASPARTYL/LYSYL-TRNA SYNTHETASE"/>
    <property type="match status" value="1"/>
</dbReference>
<dbReference type="Pfam" id="PF00152">
    <property type="entry name" value="tRNA-synt_2"/>
    <property type="match status" value="1"/>
</dbReference>
<dbReference type="Pfam" id="PF01336">
    <property type="entry name" value="tRNA_anti-codon"/>
    <property type="match status" value="1"/>
</dbReference>
<dbReference type="PRINTS" id="PR01042">
    <property type="entry name" value="TRNASYNTHASP"/>
</dbReference>
<dbReference type="SUPFAM" id="SSF55681">
    <property type="entry name" value="Class II aaRS and biotin synthetases"/>
    <property type="match status" value="1"/>
</dbReference>
<dbReference type="SUPFAM" id="SSF50249">
    <property type="entry name" value="Nucleic acid-binding proteins"/>
    <property type="match status" value="1"/>
</dbReference>
<dbReference type="PROSITE" id="PS50862">
    <property type="entry name" value="AA_TRNA_LIGASE_II"/>
    <property type="match status" value="1"/>
</dbReference>
<feature type="chain" id="PRO_1000051411" description="Asparagine--tRNA ligase">
    <location>
        <begin position="1"/>
        <end position="466"/>
    </location>
</feature>
<organism>
    <name type="scientific">Myxococcus xanthus (strain DK1622)</name>
    <dbReference type="NCBI Taxonomy" id="246197"/>
    <lineage>
        <taxon>Bacteria</taxon>
        <taxon>Pseudomonadati</taxon>
        <taxon>Myxococcota</taxon>
        <taxon>Myxococcia</taxon>
        <taxon>Myxococcales</taxon>
        <taxon>Cystobacterineae</taxon>
        <taxon>Myxococcaceae</taxon>
        <taxon>Myxococcus</taxon>
    </lineage>
</organism>